<reference key="1">
    <citation type="submission" date="2006-01" db="EMBL/GenBank/DDBJ databases">
        <title>Complete sequence of Rhodopseudomonas palustris HaA2.</title>
        <authorList>
            <consortium name="US DOE Joint Genome Institute"/>
            <person name="Copeland A."/>
            <person name="Lucas S."/>
            <person name="Lapidus A."/>
            <person name="Barry K."/>
            <person name="Detter J.C."/>
            <person name="Glavina T."/>
            <person name="Hammon N."/>
            <person name="Israni S."/>
            <person name="Pitluck S."/>
            <person name="Chain P."/>
            <person name="Malfatti S."/>
            <person name="Shin M."/>
            <person name="Vergez L."/>
            <person name="Schmutz J."/>
            <person name="Larimer F."/>
            <person name="Land M."/>
            <person name="Hauser L."/>
            <person name="Pelletier D.A."/>
            <person name="Kyrpides N."/>
            <person name="Anderson I."/>
            <person name="Oda Y."/>
            <person name="Harwood C.S."/>
            <person name="Richardson P."/>
        </authorList>
    </citation>
    <scope>NUCLEOTIDE SEQUENCE [LARGE SCALE GENOMIC DNA]</scope>
    <source>
        <strain>HaA2</strain>
    </source>
</reference>
<sequence length="199" mass="21695">MLVLGLTGSIGMGKSTTAKLFGEAGVPVYDADATVHQIYEGEAVPAIEAAFPGTTVDGKVDRALLSEKVVHDSDAMKRLEQIVHPMLRSHHQNFLDDAEASGAPVAVVDVPLLFETGGEKRVDAVVVVTTSPEVQRERILARENMTPEKLDAILARQMPDAEKRRRADFVVDTSHGLDPVRAQIREILDAAARMPRRRP</sequence>
<dbReference type="EC" id="2.7.1.24" evidence="1"/>
<dbReference type="EMBL" id="CP000250">
    <property type="protein sequence ID" value="ABD05108.1"/>
    <property type="molecule type" value="Genomic_DNA"/>
</dbReference>
<dbReference type="RefSeq" id="WP_011439298.1">
    <property type="nucleotide sequence ID" value="NC_007778.1"/>
</dbReference>
<dbReference type="SMR" id="Q2J352"/>
<dbReference type="STRING" id="316058.RPB_0397"/>
<dbReference type="KEGG" id="rpb:RPB_0397"/>
<dbReference type="eggNOG" id="COG0237">
    <property type="taxonomic scope" value="Bacteria"/>
</dbReference>
<dbReference type="HOGENOM" id="CLU_057180_3_0_5"/>
<dbReference type="OrthoDB" id="9812943at2"/>
<dbReference type="UniPathway" id="UPA00241">
    <property type="reaction ID" value="UER00356"/>
</dbReference>
<dbReference type="Proteomes" id="UP000008809">
    <property type="component" value="Chromosome"/>
</dbReference>
<dbReference type="GO" id="GO:0005737">
    <property type="term" value="C:cytoplasm"/>
    <property type="evidence" value="ECO:0007669"/>
    <property type="project" value="UniProtKB-SubCell"/>
</dbReference>
<dbReference type="GO" id="GO:0005524">
    <property type="term" value="F:ATP binding"/>
    <property type="evidence" value="ECO:0007669"/>
    <property type="project" value="UniProtKB-UniRule"/>
</dbReference>
<dbReference type="GO" id="GO:0004140">
    <property type="term" value="F:dephospho-CoA kinase activity"/>
    <property type="evidence" value="ECO:0007669"/>
    <property type="project" value="UniProtKB-UniRule"/>
</dbReference>
<dbReference type="GO" id="GO:0015937">
    <property type="term" value="P:coenzyme A biosynthetic process"/>
    <property type="evidence" value="ECO:0007669"/>
    <property type="project" value="UniProtKB-UniRule"/>
</dbReference>
<dbReference type="CDD" id="cd02022">
    <property type="entry name" value="DPCK"/>
    <property type="match status" value="1"/>
</dbReference>
<dbReference type="Gene3D" id="3.40.50.300">
    <property type="entry name" value="P-loop containing nucleotide triphosphate hydrolases"/>
    <property type="match status" value="1"/>
</dbReference>
<dbReference type="HAMAP" id="MF_00376">
    <property type="entry name" value="Dephospho_CoA_kinase"/>
    <property type="match status" value="1"/>
</dbReference>
<dbReference type="InterPro" id="IPR001977">
    <property type="entry name" value="Depp_CoAkinase"/>
</dbReference>
<dbReference type="InterPro" id="IPR027417">
    <property type="entry name" value="P-loop_NTPase"/>
</dbReference>
<dbReference type="NCBIfam" id="TIGR00152">
    <property type="entry name" value="dephospho-CoA kinase"/>
    <property type="match status" value="1"/>
</dbReference>
<dbReference type="PANTHER" id="PTHR10695:SF46">
    <property type="entry name" value="BIFUNCTIONAL COENZYME A SYNTHASE-RELATED"/>
    <property type="match status" value="1"/>
</dbReference>
<dbReference type="PANTHER" id="PTHR10695">
    <property type="entry name" value="DEPHOSPHO-COA KINASE-RELATED"/>
    <property type="match status" value="1"/>
</dbReference>
<dbReference type="Pfam" id="PF01121">
    <property type="entry name" value="CoaE"/>
    <property type="match status" value="1"/>
</dbReference>
<dbReference type="SUPFAM" id="SSF52540">
    <property type="entry name" value="P-loop containing nucleoside triphosphate hydrolases"/>
    <property type="match status" value="1"/>
</dbReference>
<dbReference type="PROSITE" id="PS51219">
    <property type="entry name" value="DPCK"/>
    <property type="match status" value="1"/>
</dbReference>
<comment type="function">
    <text evidence="1">Catalyzes the phosphorylation of the 3'-hydroxyl group of dephosphocoenzyme A to form coenzyme A.</text>
</comment>
<comment type="catalytic activity">
    <reaction evidence="1">
        <text>3'-dephospho-CoA + ATP = ADP + CoA + H(+)</text>
        <dbReference type="Rhea" id="RHEA:18245"/>
        <dbReference type="ChEBI" id="CHEBI:15378"/>
        <dbReference type="ChEBI" id="CHEBI:30616"/>
        <dbReference type="ChEBI" id="CHEBI:57287"/>
        <dbReference type="ChEBI" id="CHEBI:57328"/>
        <dbReference type="ChEBI" id="CHEBI:456216"/>
        <dbReference type="EC" id="2.7.1.24"/>
    </reaction>
</comment>
<comment type="pathway">
    <text evidence="1">Cofactor biosynthesis; coenzyme A biosynthesis; CoA from (R)-pantothenate: step 5/5.</text>
</comment>
<comment type="subcellular location">
    <subcellularLocation>
        <location evidence="1">Cytoplasm</location>
    </subcellularLocation>
</comment>
<comment type="similarity">
    <text evidence="1">Belongs to the CoaE family.</text>
</comment>
<evidence type="ECO:0000255" key="1">
    <source>
        <dbReference type="HAMAP-Rule" id="MF_00376"/>
    </source>
</evidence>
<proteinExistence type="inferred from homology"/>
<gene>
    <name evidence="1" type="primary">coaE</name>
    <name type="ordered locus">RPB_0397</name>
</gene>
<protein>
    <recommendedName>
        <fullName evidence="1">Dephospho-CoA kinase</fullName>
        <ecNumber evidence="1">2.7.1.24</ecNumber>
    </recommendedName>
    <alternativeName>
        <fullName evidence="1">Dephosphocoenzyme A kinase</fullName>
    </alternativeName>
</protein>
<accession>Q2J352</accession>
<organism>
    <name type="scientific">Rhodopseudomonas palustris (strain HaA2)</name>
    <dbReference type="NCBI Taxonomy" id="316058"/>
    <lineage>
        <taxon>Bacteria</taxon>
        <taxon>Pseudomonadati</taxon>
        <taxon>Pseudomonadota</taxon>
        <taxon>Alphaproteobacteria</taxon>
        <taxon>Hyphomicrobiales</taxon>
        <taxon>Nitrobacteraceae</taxon>
        <taxon>Rhodopseudomonas</taxon>
    </lineage>
</organism>
<keyword id="KW-0067">ATP-binding</keyword>
<keyword id="KW-0173">Coenzyme A biosynthesis</keyword>
<keyword id="KW-0963">Cytoplasm</keyword>
<keyword id="KW-0418">Kinase</keyword>
<keyword id="KW-0547">Nucleotide-binding</keyword>
<keyword id="KW-1185">Reference proteome</keyword>
<keyword id="KW-0808">Transferase</keyword>
<name>COAE_RHOP2</name>
<feature type="chain" id="PRO_0000243330" description="Dephospho-CoA kinase">
    <location>
        <begin position="1"/>
        <end position="199"/>
    </location>
</feature>
<feature type="domain" description="DPCK" evidence="1">
    <location>
        <begin position="3"/>
        <end position="199"/>
    </location>
</feature>
<feature type="binding site" evidence="1">
    <location>
        <begin position="11"/>
        <end position="16"/>
    </location>
    <ligand>
        <name>ATP</name>
        <dbReference type="ChEBI" id="CHEBI:30616"/>
    </ligand>
</feature>